<dbReference type="EMBL" id="AAFI02000005">
    <property type="protein sequence ID" value="EAL72540.1"/>
    <property type="molecule type" value="Genomic_DNA"/>
</dbReference>
<dbReference type="RefSeq" id="XP_646752.1">
    <property type="nucleotide sequence ID" value="XM_641660.1"/>
</dbReference>
<dbReference type="SMR" id="Q55BS9"/>
<dbReference type="FunCoup" id="Q55BS9">
    <property type="interactions" value="565"/>
</dbReference>
<dbReference type="STRING" id="44689.Q55BS9"/>
<dbReference type="PaxDb" id="44689-DDB0230155"/>
<dbReference type="EnsemblProtists" id="EAL72540">
    <property type="protein sequence ID" value="EAL72540"/>
    <property type="gene ID" value="DDB_G0270380"/>
</dbReference>
<dbReference type="GeneID" id="8617725"/>
<dbReference type="KEGG" id="ddi:DDB_G0270380"/>
<dbReference type="dictyBase" id="DDB_G0270380">
    <property type="gene designation" value="rpl30"/>
</dbReference>
<dbReference type="VEuPathDB" id="AmoebaDB:DDB_G0270380"/>
<dbReference type="eggNOG" id="KOG2988">
    <property type="taxonomic scope" value="Eukaryota"/>
</dbReference>
<dbReference type="HOGENOM" id="CLU_130502_0_1_1"/>
<dbReference type="InParanoid" id="Q55BS9"/>
<dbReference type="OMA" id="HRVSCLS"/>
<dbReference type="PhylomeDB" id="Q55BS9"/>
<dbReference type="Reactome" id="R-DDI-156827">
    <property type="pathway name" value="L13a-mediated translational silencing of Ceruloplasmin expression"/>
</dbReference>
<dbReference type="Reactome" id="R-DDI-1799339">
    <property type="pathway name" value="SRP-dependent cotranslational protein targeting to membrane"/>
</dbReference>
<dbReference type="Reactome" id="R-DDI-72689">
    <property type="pathway name" value="Formation of a pool of free 40S subunits"/>
</dbReference>
<dbReference type="Reactome" id="R-DDI-72706">
    <property type="pathway name" value="GTP hydrolysis and joining of the 60S ribosomal subunit"/>
</dbReference>
<dbReference type="Reactome" id="R-DDI-975956">
    <property type="pathway name" value="Nonsense Mediated Decay (NMD) independent of the Exon Junction Complex (EJC)"/>
</dbReference>
<dbReference type="Reactome" id="R-DDI-975957">
    <property type="pathway name" value="Nonsense Mediated Decay (NMD) enhanced by the Exon Junction Complex (EJC)"/>
</dbReference>
<dbReference type="PRO" id="PR:Q55BS9"/>
<dbReference type="Proteomes" id="UP000002195">
    <property type="component" value="Chromosome 1"/>
</dbReference>
<dbReference type="GO" id="GO:0022625">
    <property type="term" value="C:cytosolic large ribosomal subunit"/>
    <property type="evidence" value="ECO:0000318"/>
    <property type="project" value="GO_Central"/>
</dbReference>
<dbReference type="GO" id="GO:0031012">
    <property type="term" value="C:extracellular matrix"/>
    <property type="evidence" value="ECO:0007005"/>
    <property type="project" value="dictyBase"/>
</dbReference>
<dbReference type="GO" id="GO:0003723">
    <property type="term" value="F:RNA binding"/>
    <property type="evidence" value="ECO:0000318"/>
    <property type="project" value="GO_Central"/>
</dbReference>
<dbReference type="GO" id="GO:0003735">
    <property type="term" value="F:structural constituent of ribosome"/>
    <property type="evidence" value="ECO:0000318"/>
    <property type="project" value="GO_Central"/>
</dbReference>
<dbReference type="FunFam" id="3.30.1330.30:FF:000001">
    <property type="entry name" value="60S ribosomal protein L30"/>
    <property type="match status" value="1"/>
</dbReference>
<dbReference type="Gene3D" id="3.30.1330.30">
    <property type="match status" value="1"/>
</dbReference>
<dbReference type="InterPro" id="IPR039109">
    <property type="entry name" value="Ribosomal_eL30-like"/>
</dbReference>
<dbReference type="InterPro" id="IPR029064">
    <property type="entry name" value="Ribosomal_eL30-like_sf"/>
</dbReference>
<dbReference type="InterPro" id="IPR022991">
    <property type="entry name" value="Ribosomal_eL30_CS"/>
</dbReference>
<dbReference type="InterPro" id="IPR004038">
    <property type="entry name" value="Ribosomal_eL8/eL30/eS12/Gad45"/>
</dbReference>
<dbReference type="NCBIfam" id="NF002172">
    <property type="entry name" value="PRK01018.1"/>
    <property type="match status" value="1"/>
</dbReference>
<dbReference type="PANTHER" id="PTHR11449">
    <property type="entry name" value="RIBOSOMAL PROTEIN L30"/>
    <property type="match status" value="1"/>
</dbReference>
<dbReference type="Pfam" id="PF01248">
    <property type="entry name" value="Ribosomal_L7Ae"/>
    <property type="match status" value="1"/>
</dbReference>
<dbReference type="SUPFAM" id="SSF55315">
    <property type="entry name" value="L30e-like"/>
    <property type="match status" value="1"/>
</dbReference>
<dbReference type="PROSITE" id="PS00709">
    <property type="entry name" value="RIBOSOMAL_L30E_1"/>
    <property type="match status" value="1"/>
</dbReference>
<dbReference type="PROSITE" id="PS00993">
    <property type="entry name" value="RIBOSOMAL_L30E_2"/>
    <property type="match status" value="1"/>
</dbReference>
<comment type="similarity">
    <text evidence="1">Belongs to the eukaryotic ribosomal protein eL30 family.</text>
</comment>
<accession>Q55BS9</accession>
<feature type="chain" id="PRO_0000326192" description="Large ribosomal subunit protein eL30">
    <location>
        <begin position="1"/>
        <end position="112"/>
    </location>
</feature>
<proteinExistence type="inferred from homology"/>
<gene>
    <name type="primary">rpl30</name>
    <name type="ORF">DDB_G0270380</name>
</gene>
<protein>
    <recommendedName>
        <fullName evidence="1">Large ribosomal subunit protein eL30</fullName>
    </recommendedName>
    <alternativeName>
        <fullName>60S ribosomal protein L30</fullName>
    </alternativeName>
</protein>
<reference key="1">
    <citation type="journal article" date="2005" name="Nature">
        <title>The genome of the social amoeba Dictyostelium discoideum.</title>
        <authorList>
            <person name="Eichinger L."/>
            <person name="Pachebat J.A."/>
            <person name="Gloeckner G."/>
            <person name="Rajandream M.A."/>
            <person name="Sucgang R."/>
            <person name="Berriman M."/>
            <person name="Song J."/>
            <person name="Olsen R."/>
            <person name="Szafranski K."/>
            <person name="Xu Q."/>
            <person name="Tunggal B."/>
            <person name="Kummerfeld S."/>
            <person name="Madera M."/>
            <person name="Konfortov B.A."/>
            <person name="Rivero F."/>
            <person name="Bankier A.T."/>
            <person name="Lehmann R."/>
            <person name="Hamlin N."/>
            <person name="Davies R."/>
            <person name="Gaudet P."/>
            <person name="Fey P."/>
            <person name="Pilcher K."/>
            <person name="Chen G."/>
            <person name="Saunders D."/>
            <person name="Sodergren E.J."/>
            <person name="Davis P."/>
            <person name="Kerhornou A."/>
            <person name="Nie X."/>
            <person name="Hall N."/>
            <person name="Anjard C."/>
            <person name="Hemphill L."/>
            <person name="Bason N."/>
            <person name="Farbrother P."/>
            <person name="Desany B."/>
            <person name="Just E."/>
            <person name="Morio T."/>
            <person name="Rost R."/>
            <person name="Churcher C.M."/>
            <person name="Cooper J."/>
            <person name="Haydock S."/>
            <person name="van Driessche N."/>
            <person name="Cronin A."/>
            <person name="Goodhead I."/>
            <person name="Muzny D.M."/>
            <person name="Mourier T."/>
            <person name="Pain A."/>
            <person name="Lu M."/>
            <person name="Harper D."/>
            <person name="Lindsay R."/>
            <person name="Hauser H."/>
            <person name="James K.D."/>
            <person name="Quiles M."/>
            <person name="Madan Babu M."/>
            <person name="Saito T."/>
            <person name="Buchrieser C."/>
            <person name="Wardroper A."/>
            <person name="Felder M."/>
            <person name="Thangavelu M."/>
            <person name="Johnson D."/>
            <person name="Knights A."/>
            <person name="Loulseged H."/>
            <person name="Mungall K.L."/>
            <person name="Oliver K."/>
            <person name="Price C."/>
            <person name="Quail M.A."/>
            <person name="Urushihara H."/>
            <person name="Hernandez J."/>
            <person name="Rabbinowitsch E."/>
            <person name="Steffen D."/>
            <person name="Sanders M."/>
            <person name="Ma J."/>
            <person name="Kohara Y."/>
            <person name="Sharp S."/>
            <person name="Simmonds M.N."/>
            <person name="Spiegler S."/>
            <person name="Tivey A."/>
            <person name="Sugano S."/>
            <person name="White B."/>
            <person name="Walker D."/>
            <person name="Woodward J.R."/>
            <person name="Winckler T."/>
            <person name="Tanaka Y."/>
            <person name="Shaulsky G."/>
            <person name="Schleicher M."/>
            <person name="Weinstock G.M."/>
            <person name="Rosenthal A."/>
            <person name="Cox E.C."/>
            <person name="Chisholm R.L."/>
            <person name="Gibbs R.A."/>
            <person name="Loomis W.F."/>
            <person name="Platzer M."/>
            <person name="Kay R.R."/>
            <person name="Williams J.G."/>
            <person name="Dear P.H."/>
            <person name="Noegel A.A."/>
            <person name="Barrell B.G."/>
            <person name="Kuspa A."/>
        </authorList>
    </citation>
    <scope>NUCLEOTIDE SEQUENCE [LARGE SCALE GENOMIC DNA]</scope>
    <source>
        <strain>AX4</strain>
    </source>
</reference>
<sequence length="112" mass="12131">MVSVKKVKKSQENIGSKLALVMKSGKSQLGYKSTLKTLRAGKSKLILLASNLPSIRRSEIEYYAMLSKTTVHLYSGNNVDLGTALGRHYRVSVMSITDAGDSDILTALNAKA</sequence>
<keyword id="KW-1185">Reference proteome</keyword>
<keyword id="KW-0687">Ribonucleoprotein</keyword>
<keyword id="KW-0689">Ribosomal protein</keyword>
<evidence type="ECO:0000305" key="1"/>
<organism>
    <name type="scientific">Dictyostelium discoideum</name>
    <name type="common">Social amoeba</name>
    <dbReference type="NCBI Taxonomy" id="44689"/>
    <lineage>
        <taxon>Eukaryota</taxon>
        <taxon>Amoebozoa</taxon>
        <taxon>Evosea</taxon>
        <taxon>Eumycetozoa</taxon>
        <taxon>Dictyostelia</taxon>
        <taxon>Dictyosteliales</taxon>
        <taxon>Dictyosteliaceae</taxon>
        <taxon>Dictyostelium</taxon>
    </lineage>
</organism>
<name>RL30_DICDI</name>